<organism>
    <name type="scientific">Salmonella typhi</name>
    <dbReference type="NCBI Taxonomy" id="90370"/>
    <lineage>
        <taxon>Bacteria</taxon>
        <taxon>Pseudomonadati</taxon>
        <taxon>Pseudomonadota</taxon>
        <taxon>Gammaproteobacteria</taxon>
        <taxon>Enterobacterales</taxon>
        <taxon>Enterobacteriaceae</taxon>
        <taxon>Salmonella</taxon>
    </lineage>
</organism>
<dbReference type="EMBL" id="AL513382">
    <property type="protein sequence ID" value="CAD08674.1"/>
    <property type="molecule type" value="Genomic_DNA"/>
</dbReference>
<dbReference type="EMBL" id="AE014613">
    <property type="protein sequence ID" value="AAO67947.1"/>
    <property type="molecule type" value="Genomic_DNA"/>
</dbReference>
<dbReference type="RefSeq" id="NP_454823.1">
    <property type="nucleotide sequence ID" value="NC_003198.1"/>
</dbReference>
<dbReference type="RefSeq" id="WP_000246886.1">
    <property type="nucleotide sequence ID" value="NZ_WSUR01000009.1"/>
</dbReference>
<dbReference type="SMR" id="P66542"/>
<dbReference type="STRING" id="220341.gene:17584272"/>
<dbReference type="KEGG" id="stt:t0217"/>
<dbReference type="KEGG" id="sty:STY0239"/>
<dbReference type="PATRIC" id="fig|220341.7.peg.239"/>
<dbReference type="eggNOG" id="COG0052">
    <property type="taxonomic scope" value="Bacteria"/>
</dbReference>
<dbReference type="HOGENOM" id="CLU_040318_1_0_6"/>
<dbReference type="OMA" id="PYIFMEK"/>
<dbReference type="OrthoDB" id="9808036at2"/>
<dbReference type="Proteomes" id="UP000000541">
    <property type="component" value="Chromosome"/>
</dbReference>
<dbReference type="Proteomes" id="UP000002670">
    <property type="component" value="Chromosome"/>
</dbReference>
<dbReference type="GO" id="GO:0022627">
    <property type="term" value="C:cytosolic small ribosomal subunit"/>
    <property type="evidence" value="ECO:0007669"/>
    <property type="project" value="TreeGrafter"/>
</dbReference>
<dbReference type="GO" id="GO:0003735">
    <property type="term" value="F:structural constituent of ribosome"/>
    <property type="evidence" value="ECO:0007669"/>
    <property type="project" value="InterPro"/>
</dbReference>
<dbReference type="GO" id="GO:0006412">
    <property type="term" value="P:translation"/>
    <property type="evidence" value="ECO:0007669"/>
    <property type="project" value="UniProtKB-UniRule"/>
</dbReference>
<dbReference type="CDD" id="cd01425">
    <property type="entry name" value="RPS2"/>
    <property type="match status" value="1"/>
</dbReference>
<dbReference type="FunFam" id="1.10.287.610:FF:000001">
    <property type="entry name" value="30S ribosomal protein S2"/>
    <property type="match status" value="1"/>
</dbReference>
<dbReference type="Gene3D" id="3.40.50.10490">
    <property type="entry name" value="Glucose-6-phosphate isomerase like protein, domain 1"/>
    <property type="match status" value="1"/>
</dbReference>
<dbReference type="Gene3D" id="1.10.287.610">
    <property type="entry name" value="Helix hairpin bin"/>
    <property type="match status" value="1"/>
</dbReference>
<dbReference type="HAMAP" id="MF_00291_B">
    <property type="entry name" value="Ribosomal_uS2_B"/>
    <property type="match status" value="1"/>
</dbReference>
<dbReference type="InterPro" id="IPR001865">
    <property type="entry name" value="Ribosomal_uS2"/>
</dbReference>
<dbReference type="InterPro" id="IPR005706">
    <property type="entry name" value="Ribosomal_uS2_bac/mit/plastid"/>
</dbReference>
<dbReference type="InterPro" id="IPR018130">
    <property type="entry name" value="Ribosomal_uS2_CS"/>
</dbReference>
<dbReference type="InterPro" id="IPR023591">
    <property type="entry name" value="Ribosomal_uS2_flav_dom_sf"/>
</dbReference>
<dbReference type="NCBIfam" id="TIGR01011">
    <property type="entry name" value="rpsB_bact"/>
    <property type="match status" value="1"/>
</dbReference>
<dbReference type="PANTHER" id="PTHR12534">
    <property type="entry name" value="30S RIBOSOMAL PROTEIN S2 PROKARYOTIC AND ORGANELLAR"/>
    <property type="match status" value="1"/>
</dbReference>
<dbReference type="PANTHER" id="PTHR12534:SF0">
    <property type="entry name" value="SMALL RIBOSOMAL SUBUNIT PROTEIN US2M"/>
    <property type="match status" value="1"/>
</dbReference>
<dbReference type="Pfam" id="PF00318">
    <property type="entry name" value="Ribosomal_S2"/>
    <property type="match status" value="1"/>
</dbReference>
<dbReference type="PRINTS" id="PR00395">
    <property type="entry name" value="RIBOSOMALS2"/>
</dbReference>
<dbReference type="SUPFAM" id="SSF52313">
    <property type="entry name" value="Ribosomal protein S2"/>
    <property type="match status" value="1"/>
</dbReference>
<dbReference type="PROSITE" id="PS00962">
    <property type="entry name" value="RIBOSOMAL_S2_1"/>
    <property type="match status" value="1"/>
</dbReference>
<dbReference type="PROSITE" id="PS00963">
    <property type="entry name" value="RIBOSOMAL_S2_2"/>
    <property type="match status" value="1"/>
</dbReference>
<name>RS2_SALTI</name>
<proteinExistence type="inferred from homology"/>
<feature type="initiator methionine" description="Removed" evidence="1">
    <location>
        <position position="1"/>
    </location>
</feature>
<feature type="chain" id="PRO_0000134232" description="Small ribosomal subunit protein uS2">
    <location>
        <begin position="2"/>
        <end position="241"/>
    </location>
</feature>
<sequence length="241" mass="26759">MATVSMRDMLKAGVHFGHQTRYWNPKMKPFIFGARNKVHIINLEKTVPMFNEALAELNKISARKGKILFVGTKRAASEAVKEAANSCDQFFVNHRWLGGMLTNWKTVRQSIKRLKDLETQSQDGTFEKLTKKEALMRTRELEKLENSLGGIKDMGGLPDALFVIDADHEHIAIKEANNLGIPVFAIVDTNSDPDGVDFVIPGNDDAIRAVSLYLGAVAATVREGRSQDLASQAEESFVEAE</sequence>
<comment type="similarity">
    <text evidence="2">Belongs to the universal ribosomal protein uS2 family.</text>
</comment>
<evidence type="ECO:0000250" key="1"/>
<evidence type="ECO:0000255" key="2">
    <source>
        <dbReference type="HAMAP-Rule" id="MF_00291"/>
    </source>
</evidence>
<evidence type="ECO:0000305" key="3"/>
<reference key="1">
    <citation type="journal article" date="2001" name="Nature">
        <title>Complete genome sequence of a multiple drug resistant Salmonella enterica serovar Typhi CT18.</title>
        <authorList>
            <person name="Parkhill J."/>
            <person name="Dougan G."/>
            <person name="James K.D."/>
            <person name="Thomson N.R."/>
            <person name="Pickard D."/>
            <person name="Wain J."/>
            <person name="Churcher C.M."/>
            <person name="Mungall K.L."/>
            <person name="Bentley S.D."/>
            <person name="Holden M.T.G."/>
            <person name="Sebaihia M."/>
            <person name="Baker S."/>
            <person name="Basham D."/>
            <person name="Brooks K."/>
            <person name="Chillingworth T."/>
            <person name="Connerton P."/>
            <person name="Cronin A."/>
            <person name="Davis P."/>
            <person name="Davies R.M."/>
            <person name="Dowd L."/>
            <person name="White N."/>
            <person name="Farrar J."/>
            <person name="Feltwell T."/>
            <person name="Hamlin N."/>
            <person name="Haque A."/>
            <person name="Hien T.T."/>
            <person name="Holroyd S."/>
            <person name="Jagels K."/>
            <person name="Krogh A."/>
            <person name="Larsen T.S."/>
            <person name="Leather S."/>
            <person name="Moule S."/>
            <person name="O'Gaora P."/>
            <person name="Parry C."/>
            <person name="Quail M.A."/>
            <person name="Rutherford K.M."/>
            <person name="Simmonds M."/>
            <person name="Skelton J."/>
            <person name="Stevens K."/>
            <person name="Whitehead S."/>
            <person name="Barrell B.G."/>
        </authorList>
    </citation>
    <scope>NUCLEOTIDE SEQUENCE [LARGE SCALE GENOMIC DNA]</scope>
    <source>
        <strain>CT18</strain>
    </source>
</reference>
<reference key="2">
    <citation type="journal article" date="2003" name="J. Bacteriol.">
        <title>Comparative genomics of Salmonella enterica serovar Typhi strains Ty2 and CT18.</title>
        <authorList>
            <person name="Deng W."/>
            <person name="Liou S.-R."/>
            <person name="Plunkett G. III"/>
            <person name="Mayhew G.F."/>
            <person name="Rose D.J."/>
            <person name="Burland V."/>
            <person name="Kodoyianni V."/>
            <person name="Schwartz D.C."/>
            <person name="Blattner F.R."/>
        </authorList>
    </citation>
    <scope>NUCLEOTIDE SEQUENCE [LARGE SCALE GENOMIC DNA]</scope>
    <source>
        <strain>ATCC 700931 / Ty2</strain>
    </source>
</reference>
<keyword id="KW-0687">Ribonucleoprotein</keyword>
<keyword id="KW-0689">Ribosomal protein</keyword>
<accession>P66542</accession>
<accession>Q8XFT5</accession>
<protein>
    <recommendedName>
        <fullName evidence="2">Small ribosomal subunit protein uS2</fullName>
    </recommendedName>
    <alternativeName>
        <fullName evidence="3">30S ribosomal protein S2</fullName>
    </alternativeName>
</protein>
<gene>
    <name evidence="2" type="primary">rpsB</name>
    <name type="ordered locus">STY0239</name>
    <name type="ordered locus">t0217</name>
</gene>